<protein>
    <recommendedName>
        <fullName>Probable lysosomal cobalamin transporter</fullName>
    </recommendedName>
</protein>
<name>LMBD1_COCIM</name>
<proteinExistence type="inferred from homology"/>
<comment type="function">
    <text evidence="1">Probable lysosomal cobalamin transporter. Required to export cobalamin from lysosomes allowing its conversion to cofactors (By similarity).</text>
</comment>
<comment type="subcellular location">
    <subcellularLocation>
        <location evidence="1">Lysosome membrane</location>
        <topology evidence="1">Multi-pass membrane protein</topology>
    </subcellularLocation>
</comment>
<comment type="similarity">
    <text evidence="3">Belongs to the LIMR family. LMBRD1 subfamily.</text>
</comment>
<dbReference type="EMBL" id="GG704911">
    <property type="protein sequence ID" value="EAS36900.3"/>
    <property type="molecule type" value="Genomic_DNA"/>
</dbReference>
<dbReference type="RefSeq" id="XP_001248483.1">
    <property type="nucleotide sequence ID" value="XM_001248482.2"/>
</dbReference>
<dbReference type="SMR" id="Q1E5A9"/>
<dbReference type="STRING" id="246410.Q1E5A9"/>
<dbReference type="GeneID" id="4568109"/>
<dbReference type="KEGG" id="cim:CIMG_02254"/>
<dbReference type="VEuPathDB" id="FungiDB:CIMG_02254"/>
<dbReference type="InParanoid" id="Q1E5A9"/>
<dbReference type="OMA" id="FWAQFVF"/>
<dbReference type="OrthoDB" id="73273at2759"/>
<dbReference type="Proteomes" id="UP000001261">
    <property type="component" value="Unassembled WGS sequence"/>
</dbReference>
<dbReference type="GO" id="GO:0005774">
    <property type="term" value="C:vacuolar membrane"/>
    <property type="evidence" value="ECO:0007669"/>
    <property type="project" value="TreeGrafter"/>
</dbReference>
<dbReference type="GO" id="GO:0031419">
    <property type="term" value="F:cobalamin binding"/>
    <property type="evidence" value="ECO:0007669"/>
    <property type="project" value="UniProtKB-KW"/>
</dbReference>
<dbReference type="GO" id="GO:0072665">
    <property type="term" value="P:protein localization to vacuole"/>
    <property type="evidence" value="ECO:0007669"/>
    <property type="project" value="TreeGrafter"/>
</dbReference>
<dbReference type="InterPro" id="IPR050854">
    <property type="entry name" value="LMBD1_LysCbl_Transport"/>
</dbReference>
<dbReference type="InterPro" id="IPR006876">
    <property type="entry name" value="LMBR1-like_membr_prot"/>
</dbReference>
<dbReference type="PANTHER" id="PTHR16130:SF2">
    <property type="entry name" value="LYSOSOMAL COBALAMIN TRANSPORT ESCORT PROTEIN LMBD1"/>
    <property type="match status" value="1"/>
</dbReference>
<dbReference type="PANTHER" id="PTHR16130">
    <property type="entry name" value="LYSOSOMAL COBALAMIN TRANSPORTER-RELATED"/>
    <property type="match status" value="1"/>
</dbReference>
<dbReference type="Pfam" id="PF04791">
    <property type="entry name" value="LMBR1"/>
    <property type="match status" value="1"/>
</dbReference>
<accession>Q1E5A9</accession>
<accession>J3KLB1</accession>
<gene>
    <name type="ORF">CIMG_02254</name>
</gene>
<evidence type="ECO:0000250" key="1"/>
<evidence type="ECO:0000255" key="2"/>
<evidence type="ECO:0000305" key="3"/>
<keyword id="KW-0846">Cobalamin</keyword>
<keyword id="KW-0170">Cobalt</keyword>
<keyword id="KW-0458">Lysosome</keyword>
<keyword id="KW-0472">Membrane</keyword>
<keyword id="KW-1185">Reference proteome</keyword>
<keyword id="KW-0812">Transmembrane</keyword>
<keyword id="KW-1133">Transmembrane helix</keyword>
<keyword id="KW-0813">Transport</keyword>
<organism>
    <name type="scientific">Coccidioides immitis (strain RS)</name>
    <name type="common">Valley fever fungus</name>
    <dbReference type="NCBI Taxonomy" id="246410"/>
    <lineage>
        <taxon>Eukaryota</taxon>
        <taxon>Fungi</taxon>
        <taxon>Dikarya</taxon>
        <taxon>Ascomycota</taxon>
        <taxon>Pezizomycotina</taxon>
        <taxon>Eurotiomycetes</taxon>
        <taxon>Eurotiomycetidae</taxon>
        <taxon>Onygenales</taxon>
        <taxon>Onygenaceae</taxon>
        <taxon>Coccidioides</taxon>
    </lineage>
</organism>
<sequence length="584" mass="66039">MALLHSTLIWIVYAIVVGILSIVASTFVYIYQTPRDRSAAVTTVCIFTLTALLATVLLLPVDVALVSSTTSEFGRRKDWATDHEVEKITYSLTVVYYFLYSLDAVLCLLIVPFTYFWYEEYDEVAYEDDGRFTRKPFWGAFKYTLVFILLTIILFLVGFFVPVAKDRKGAHFDLDYFKRLLTENHGERALTFALGLLIVMGIIVYVIYSSTGLAFFPISFIKSSPSISSPMLSANIESRLEENIERQRQLEGRCGGNPDHLSSKDRRELDSLVREERTLRRRKRLAEASRGQGRNFVIKVWYKLGAVFRPIKLLGGLLLLAISVMIWISMLLTCIDKAKNSVCKQKCGYILGKINIINPVNWVLVEAASVFPADYVIFIVLVLHLFTSSVVGIATIGIRFLWIRLLQIRKGHTSPQALLLATVMLTLITLALNYSISMIVVPQYATYGPQTFCDYPSIPASAPLDCSKHKEYLKPCSELANNPAAKAVCTPSVASTFLNRITLNFPFFGIVDFWAQFVFLGFSLIVLLISLFRTPRFDEQQMDEDAEEAEEEGLLAASGSRFNAAWQDTTGRTRDQRVRFRDDE</sequence>
<reference key="1">
    <citation type="journal article" date="2009" name="Genome Res.">
        <title>Comparative genomic analyses of the human fungal pathogens Coccidioides and their relatives.</title>
        <authorList>
            <person name="Sharpton T.J."/>
            <person name="Stajich J.E."/>
            <person name="Rounsley S.D."/>
            <person name="Gardner M.J."/>
            <person name="Wortman J.R."/>
            <person name="Jordar V.S."/>
            <person name="Maiti R."/>
            <person name="Kodira C.D."/>
            <person name="Neafsey D.E."/>
            <person name="Zeng Q."/>
            <person name="Hung C.-Y."/>
            <person name="McMahan C."/>
            <person name="Muszewska A."/>
            <person name="Grynberg M."/>
            <person name="Mandel M.A."/>
            <person name="Kellner E.M."/>
            <person name="Barker B.M."/>
            <person name="Galgiani J.N."/>
            <person name="Orbach M.J."/>
            <person name="Kirkland T.N."/>
            <person name="Cole G.T."/>
            <person name="Henn M.R."/>
            <person name="Birren B.W."/>
            <person name="Taylor J.W."/>
        </authorList>
    </citation>
    <scope>NUCLEOTIDE SEQUENCE [LARGE SCALE GENOMIC DNA]</scope>
    <source>
        <strain>RS</strain>
    </source>
</reference>
<reference key="2">
    <citation type="journal article" date="2010" name="Genome Res.">
        <title>Population genomic sequencing of Coccidioides fungi reveals recent hybridization and transposon control.</title>
        <authorList>
            <person name="Neafsey D.E."/>
            <person name="Barker B.M."/>
            <person name="Sharpton T.J."/>
            <person name="Stajich J.E."/>
            <person name="Park D.J."/>
            <person name="Whiston E."/>
            <person name="Hung C.-Y."/>
            <person name="McMahan C."/>
            <person name="White J."/>
            <person name="Sykes S."/>
            <person name="Heiman D."/>
            <person name="Young S."/>
            <person name="Zeng Q."/>
            <person name="Abouelleil A."/>
            <person name="Aftuck L."/>
            <person name="Bessette D."/>
            <person name="Brown A."/>
            <person name="FitzGerald M."/>
            <person name="Lui A."/>
            <person name="Macdonald J.P."/>
            <person name="Priest M."/>
            <person name="Orbach M.J."/>
            <person name="Galgiani J.N."/>
            <person name="Kirkland T.N."/>
            <person name="Cole G.T."/>
            <person name="Birren B.W."/>
            <person name="Henn M.R."/>
            <person name="Taylor J.W."/>
            <person name="Rounsley S.D."/>
        </authorList>
    </citation>
    <scope>GENOME REANNOTATION</scope>
    <source>
        <strain>RS</strain>
    </source>
</reference>
<feature type="chain" id="PRO_0000365830" description="Probable lysosomal cobalamin transporter">
    <location>
        <begin position="1"/>
        <end position="584"/>
    </location>
</feature>
<feature type="transmembrane region" description="Helical" evidence="2">
    <location>
        <begin position="8"/>
        <end position="28"/>
    </location>
</feature>
<feature type="transmembrane region" description="Helical" evidence="2">
    <location>
        <begin position="46"/>
        <end position="66"/>
    </location>
</feature>
<feature type="transmembrane region" description="Helical" evidence="2">
    <location>
        <begin position="93"/>
        <end position="113"/>
    </location>
</feature>
<feature type="transmembrane region" description="Helical" evidence="2">
    <location>
        <begin position="144"/>
        <end position="164"/>
    </location>
</feature>
<feature type="transmembrane region" description="Helical" evidence="2">
    <location>
        <begin position="189"/>
        <end position="209"/>
    </location>
</feature>
<feature type="transmembrane region" description="Helical" evidence="2">
    <location>
        <begin position="313"/>
        <end position="333"/>
    </location>
</feature>
<feature type="transmembrane region" description="Helical" evidence="2">
    <location>
        <begin position="350"/>
        <end position="370"/>
    </location>
</feature>
<feature type="transmembrane region" description="Helical" evidence="2">
    <location>
        <begin position="376"/>
        <end position="396"/>
    </location>
</feature>
<feature type="transmembrane region" description="Helical" evidence="2">
    <location>
        <begin position="421"/>
        <end position="441"/>
    </location>
</feature>
<feature type="transmembrane region" description="Helical" evidence="2">
    <location>
        <begin position="509"/>
        <end position="529"/>
    </location>
</feature>